<accession>A5EEN4</accession>
<protein>
    <recommendedName>
        <fullName evidence="1">Pyridoxine/pyridoxamine 5'-phosphate oxidase</fullName>
        <ecNumber evidence="1">1.4.3.5</ecNumber>
    </recommendedName>
    <alternativeName>
        <fullName evidence="1">PNP/PMP oxidase</fullName>
        <shortName evidence="1">PNPOx</shortName>
    </alternativeName>
    <alternativeName>
        <fullName evidence="1">Pyridoxal 5'-phosphate synthase</fullName>
    </alternativeName>
</protein>
<proteinExistence type="inferred from homology"/>
<keyword id="KW-0285">Flavoprotein</keyword>
<keyword id="KW-0288">FMN</keyword>
<keyword id="KW-0560">Oxidoreductase</keyword>
<keyword id="KW-0664">Pyridoxine biosynthesis</keyword>
<keyword id="KW-1185">Reference proteome</keyword>
<feature type="chain" id="PRO_1000069681" description="Pyridoxine/pyridoxamine 5'-phosphate oxidase">
    <location>
        <begin position="1"/>
        <end position="216"/>
    </location>
</feature>
<feature type="binding site" evidence="1">
    <location>
        <begin position="63"/>
        <end position="68"/>
    </location>
    <ligand>
        <name>FMN</name>
        <dbReference type="ChEBI" id="CHEBI:58210"/>
    </ligand>
</feature>
<feature type="binding site" evidence="1">
    <location>
        <position position="68"/>
    </location>
    <ligand>
        <name>substrate</name>
    </ligand>
</feature>
<feature type="binding site" evidence="1">
    <location>
        <begin position="78"/>
        <end position="79"/>
    </location>
    <ligand>
        <name>FMN</name>
        <dbReference type="ChEBI" id="CHEBI:58210"/>
    </ligand>
</feature>
<feature type="binding site" evidence="1">
    <location>
        <position position="85"/>
    </location>
    <ligand>
        <name>FMN</name>
        <dbReference type="ChEBI" id="CHEBI:58210"/>
    </ligand>
</feature>
<feature type="binding site" evidence="1">
    <location>
        <position position="107"/>
    </location>
    <ligand>
        <name>FMN</name>
        <dbReference type="ChEBI" id="CHEBI:58210"/>
    </ligand>
</feature>
<feature type="binding site" evidence="1">
    <location>
        <position position="125"/>
    </location>
    <ligand>
        <name>substrate</name>
    </ligand>
</feature>
<feature type="binding site" evidence="1">
    <location>
        <position position="129"/>
    </location>
    <ligand>
        <name>substrate</name>
    </ligand>
</feature>
<feature type="binding site" evidence="1">
    <location>
        <begin position="142"/>
        <end position="143"/>
    </location>
    <ligand>
        <name>FMN</name>
        <dbReference type="ChEBI" id="CHEBI:58210"/>
    </ligand>
</feature>
<feature type="binding site" evidence="1">
    <location>
        <position position="187"/>
    </location>
    <ligand>
        <name>FMN</name>
        <dbReference type="ChEBI" id="CHEBI:58210"/>
    </ligand>
</feature>
<feature type="binding site" evidence="1">
    <location>
        <begin position="193"/>
        <end position="195"/>
    </location>
    <ligand>
        <name>substrate</name>
    </ligand>
</feature>
<feature type="binding site" evidence="1">
    <location>
        <position position="197"/>
    </location>
    <ligand>
        <name>FMN</name>
        <dbReference type="ChEBI" id="CHEBI:58210"/>
    </ligand>
</feature>
<organism>
    <name type="scientific">Bradyrhizobium sp. (strain BTAi1 / ATCC BAA-1182)</name>
    <dbReference type="NCBI Taxonomy" id="288000"/>
    <lineage>
        <taxon>Bacteria</taxon>
        <taxon>Pseudomonadati</taxon>
        <taxon>Pseudomonadota</taxon>
        <taxon>Alphaproteobacteria</taxon>
        <taxon>Hyphomicrobiales</taxon>
        <taxon>Nitrobacteraceae</taxon>
        <taxon>Bradyrhizobium</taxon>
    </lineage>
</organism>
<comment type="function">
    <text evidence="1">Catalyzes the oxidation of either pyridoxine 5'-phosphate (PNP) or pyridoxamine 5'-phosphate (PMP) into pyridoxal 5'-phosphate (PLP).</text>
</comment>
<comment type="catalytic activity">
    <reaction evidence="1">
        <text>pyridoxamine 5'-phosphate + O2 + H2O = pyridoxal 5'-phosphate + H2O2 + NH4(+)</text>
        <dbReference type="Rhea" id="RHEA:15817"/>
        <dbReference type="ChEBI" id="CHEBI:15377"/>
        <dbReference type="ChEBI" id="CHEBI:15379"/>
        <dbReference type="ChEBI" id="CHEBI:16240"/>
        <dbReference type="ChEBI" id="CHEBI:28938"/>
        <dbReference type="ChEBI" id="CHEBI:58451"/>
        <dbReference type="ChEBI" id="CHEBI:597326"/>
        <dbReference type="EC" id="1.4.3.5"/>
    </reaction>
</comment>
<comment type="catalytic activity">
    <reaction evidence="1">
        <text>pyridoxine 5'-phosphate + O2 = pyridoxal 5'-phosphate + H2O2</text>
        <dbReference type="Rhea" id="RHEA:15149"/>
        <dbReference type="ChEBI" id="CHEBI:15379"/>
        <dbReference type="ChEBI" id="CHEBI:16240"/>
        <dbReference type="ChEBI" id="CHEBI:58589"/>
        <dbReference type="ChEBI" id="CHEBI:597326"/>
        <dbReference type="EC" id="1.4.3.5"/>
    </reaction>
</comment>
<comment type="cofactor">
    <cofactor evidence="1">
        <name>FMN</name>
        <dbReference type="ChEBI" id="CHEBI:58210"/>
    </cofactor>
    <text evidence="1">Binds 1 FMN per subunit.</text>
</comment>
<comment type="pathway">
    <text evidence="1">Cofactor metabolism; pyridoxal 5'-phosphate salvage; pyridoxal 5'-phosphate from pyridoxamine 5'-phosphate: step 1/1.</text>
</comment>
<comment type="pathway">
    <text evidence="1">Cofactor metabolism; pyridoxal 5'-phosphate salvage; pyridoxal 5'-phosphate from pyridoxine 5'-phosphate: step 1/1.</text>
</comment>
<comment type="subunit">
    <text evidence="1">Homodimer.</text>
</comment>
<comment type="similarity">
    <text evidence="1">Belongs to the pyridoxamine 5'-phosphate oxidase family.</text>
</comment>
<reference key="1">
    <citation type="journal article" date="2007" name="Science">
        <title>Legumes symbioses: absence of nod genes in photosynthetic bradyrhizobia.</title>
        <authorList>
            <person name="Giraud E."/>
            <person name="Moulin L."/>
            <person name="Vallenet D."/>
            <person name="Barbe V."/>
            <person name="Cytryn E."/>
            <person name="Avarre J.-C."/>
            <person name="Jaubert M."/>
            <person name="Simon D."/>
            <person name="Cartieaux F."/>
            <person name="Prin Y."/>
            <person name="Bena G."/>
            <person name="Hannibal L."/>
            <person name="Fardoux J."/>
            <person name="Kojadinovic M."/>
            <person name="Vuillet L."/>
            <person name="Lajus A."/>
            <person name="Cruveiller S."/>
            <person name="Rouy Z."/>
            <person name="Mangenot S."/>
            <person name="Segurens B."/>
            <person name="Dossat C."/>
            <person name="Franck W.L."/>
            <person name="Chang W.-S."/>
            <person name="Saunders E."/>
            <person name="Bruce D."/>
            <person name="Richardson P."/>
            <person name="Normand P."/>
            <person name="Dreyfus B."/>
            <person name="Pignol D."/>
            <person name="Stacey G."/>
            <person name="Emerich D."/>
            <person name="Vermeglio A."/>
            <person name="Medigue C."/>
            <person name="Sadowsky M."/>
        </authorList>
    </citation>
    <scope>NUCLEOTIDE SEQUENCE [LARGE SCALE GENOMIC DNA]</scope>
    <source>
        <strain>BTAi1 / ATCC BAA-1182</strain>
    </source>
</reference>
<evidence type="ECO:0000255" key="1">
    <source>
        <dbReference type="HAMAP-Rule" id="MF_01629"/>
    </source>
</evidence>
<gene>
    <name evidence="1" type="primary">pdxH</name>
    <name type="ordered locus">BBta_2463</name>
</gene>
<name>PDXH_BRASB</name>
<dbReference type="EC" id="1.4.3.5" evidence="1"/>
<dbReference type="EMBL" id="CP000494">
    <property type="protein sequence ID" value="ABQ34628.1"/>
    <property type="molecule type" value="Genomic_DNA"/>
</dbReference>
<dbReference type="RefSeq" id="WP_012042656.1">
    <property type="nucleotide sequence ID" value="NC_009485.1"/>
</dbReference>
<dbReference type="SMR" id="A5EEN4"/>
<dbReference type="STRING" id="288000.BBta_2463"/>
<dbReference type="KEGG" id="bbt:BBta_2463"/>
<dbReference type="eggNOG" id="COG0259">
    <property type="taxonomic scope" value="Bacteria"/>
</dbReference>
<dbReference type="HOGENOM" id="CLU_032263_2_3_5"/>
<dbReference type="OrthoDB" id="9780392at2"/>
<dbReference type="UniPathway" id="UPA01068">
    <property type="reaction ID" value="UER00304"/>
</dbReference>
<dbReference type="UniPathway" id="UPA01068">
    <property type="reaction ID" value="UER00305"/>
</dbReference>
<dbReference type="Proteomes" id="UP000000246">
    <property type="component" value="Chromosome"/>
</dbReference>
<dbReference type="GO" id="GO:0010181">
    <property type="term" value="F:FMN binding"/>
    <property type="evidence" value="ECO:0007669"/>
    <property type="project" value="UniProtKB-UniRule"/>
</dbReference>
<dbReference type="GO" id="GO:0004733">
    <property type="term" value="F:pyridoxamine phosphate oxidase activity"/>
    <property type="evidence" value="ECO:0007669"/>
    <property type="project" value="UniProtKB-UniRule"/>
</dbReference>
<dbReference type="GO" id="GO:0008615">
    <property type="term" value="P:pyridoxine biosynthetic process"/>
    <property type="evidence" value="ECO:0007669"/>
    <property type="project" value="UniProtKB-KW"/>
</dbReference>
<dbReference type="FunFam" id="2.30.110.10:FF:000012">
    <property type="entry name" value="Predicted protein"/>
    <property type="match status" value="1"/>
</dbReference>
<dbReference type="Gene3D" id="2.30.110.10">
    <property type="entry name" value="Electron Transport, Fmn-binding Protein, Chain A"/>
    <property type="match status" value="1"/>
</dbReference>
<dbReference type="HAMAP" id="MF_01629">
    <property type="entry name" value="PdxH"/>
    <property type="match status" value="1"/>
</dbReference>
<dbReference type="InterPro" id="IPR000659">
    <property type="entry name" value="Pyridox_Oxase"/>
</dbReference>
<dbReference type="InterPro" id="IPR019740">
    <property type="entry name" value="Pyridox_Oxase_CS"/>
</dbReference>
<dbReference type="InterPro" id="IPR011576">
    <property type="entry name" value="Pyridox_Oxase_N"/>
</dbReference>
<dbReference type="InterPro" id="IPR019576">
    <property type="entry name" value="Pyridoxamine_oxidase_dimer_C"/>
</dbReference>
<dbReference type="InterPro" id="IPR012349">
    <property type="entry name" value="Split_barrel_FMN-bd"/>
</dbReference>
<dbReference type="NCBIfam" id="TIGR00558">
    <property type="entry name" value="pdxH"/>
    <property type="match status" value="1"/>
</dbReference>
<dbReference type="NCBIfam" id="NF004231">
    <property type="entry name" value="PRK05679.1"/>
    <property type="match status" value="1"/>
</dbReference>
<dbReference type="PANTHER" id="PTHR10851:SF0">
    <property type="entry name" value="PYRIDOXINE-5'-PHOSPHATE OXIDASE"/>
    <property type="match status" value="1"/>
</dbReference>
<dbReference type="PANTHER" id="PTHR10851">
    <property type="entry name" value="PYRIDOXINE-5-PHOSPHATE OXIDASE"/>
    <property type="match status" value="1"/>
</dbReference>
<dbReference type="Pfam" id="PF10590">
    <property type="entry name" value="PNP_phzG_C"/>
    <property type="match status" value="1"/>
</dbReference>
<dbReference type="Pfam" id="PF01243">
    <property type="entry name" value="PNPOx_N"/>
    <property type="match status" value="1"/>
</dbReference>
<dbReference type="PIRSF" id="PIRSF000190">
    <property type="entry name" value="Pyd_amn-ph_oxd"/>
    <property type="match status" value="1"/>
</dbReference>
<dbReference type="SUPFAM" id="SSF50475">
    <property type="entry name" value="FMN-binding split barrel"/>
    <property type="match status" value="1"/>
</dbReference>
<dbReference type="PROSITE" id="PS01064">
    <property type="entry name" value="PYRIDOX_OXIDASE"/>
    <property type="match status" value="1"/>
</dbReference>
<sequence>MTDPTSIKHQTTLTSGTSADFTQASEPFALFAEWFSEANKSELNDPNAMALATVDDSGLPDVRMVLMKGYDEDGFVFYSHKASQKGQELAGNPKAALLFHWKSLRRQVRIRGLVTPVTDEEADAYFATRPKQAQLGAWASKQSQPLESRFAFEQAIAKVAAQYIIGEVPRPPGWSGWRITPVRMEFWHDRPFRLHDRIEFRRDAAGQPWTKVRMYP</sequence>